<protein>
    <recommendedName>
        <fullName evidence="1">Allantoinase</fullName>
        <ecNumber evidence="1">3.5.2.5</ecNumber>
    </recommendedName>
    <alternativeName>
        <fullName evidence="1">Allantoin-utilizing enzyme</fullName>
    </alternativeName>
</protein>
<accession>A9MW45</accession>
<sequence length="453" mass="49901">MSFDLIIKNGTVILENEARVIDIAVQGGKIAAIGENLGEAKNVLDATGLIVSPGMVDAHTHISEPGRTHWEGYETGTRAAAKGGITTMIEMPLNQLPATVDRETIELKFDAAKGKLTIDAAQLGGLVSYNLDRLHELDEVGVVGFKCFVATCGDRGIDNDFRDVNDWQFYKGAQKLGEMDQTVLVHCENALICDELGEEAKREGRVTAHDYVASRPVFTEVEAIRRVLYLAKAAGCRLHVCHISSPEGVEEVTRARQEGQDVTCESCPHYFVLDTDQFEEIGTLAKCSPPIRDQENQKGMWEKLFNGEIDCLVSDHSPCPPEMKAGNIMQAWGGIAGLQNCMDVMFDEAVQKRGMSLPMFGKLMATNAADIFGLKHKGRIAPGKEADLVFIQPDSSYVLKNEDLEYRHKVSPYVGRTIGARITKTILRGDVIYDIEHGFPVPPKGQFILKHQQ</sequence>
<organism>
    <name type="scientific">Salmonella paratyphi B (strain ATCC BAA-1250 / SPB7)</name>
    <dbReference type="NCBI Taxonomy" id="1016998"/>
    <lineage>
        <taxon>Bacteria</taxon>
        <taxon>Pseudomonadati</taxon>
        <taxon>Pseudomonadota</taxon>
        <taxon>Gammaproteobacteria</taxon>
        <taxon>Enterobacterales</taxon>
        <taxon>Enterobacteriaceae</taxon>
        <taxon>Salmonella</taxon>
    </lineage>
</organism>
<dbReference type="EC" id="3.5.2.5" evidence="1"/>
<dbReference type="EMBL" id="CP000886">
    <property type="protein sequence ID" value="ABX68404.1"/>
    <property type="molecule type" value="Genomic_DNA"/>
</dbReference>
<dbReference type="RefSeq" id="WP_000006866.1">
    <property type="nucleotide sequence ID" value="NC_010102.1"/>
</dbReference>
<dbReference type="SMR" id="A9MW45"/>
<dbReference type="KEGG" id="spq:SPAB_03041"/>
<dbReference type="PATRIC" id="fig|1016998.12.peg.2870"/>
<dbReference type="HOGENOM" id="CLU_015572_4_2_6"/>
<dbReference type="BioCyc" id="SENT1016998:SPAB_RS12410-MONOMER"/>
<dbReference type="UniPathway" id="UPA00395">
    <property type="reaction ID" value="UER00653"/>
</dbReference>
<dbReference type="Proteomes" id="UP000008556">
    <property type="component" value="Chromosome"/>
</dbReference>
<dbReference type="GO" id="GO:0005737">
    <property type="term" value="C:cytoplasm"/>
    <property type="evidence" value="ECO:0007669"/>
    <property type="project" value="TreeGrafter"/>
</dbReference>
<dbReference type="GO" id="GO:0004038">
    <property type="term" value="F:allantoinase activity"/>
    <property type="evidence" value="ECO:0007669"/>
    <property type="project" value="UniProtKB-UniRule"/>
</dbReference>
<dbReference type="GO" id="GO:0050897">
    <property type="term" value="F:cobalt ion binding"/>
    <property type="evidence" value="ECO:0007669"/>
    <property type="project" value="InterPro"/>
</dbReference>
<dbReference type="GO" id="GO:0008270">
    <property type="term" value="F:zinc ion binding"/>
    <property type="evidence" value="ECO:0007669"/>
    <property type="project" value="InterPro"/>
</dbReference>
<dbReference type="GO" id="GO:0000256">
    <property type="term" value="P:allantoin catabolic process"/>
    <property type="evidence" value="ECO:0007669"/>
    <property type="project" value="UniProtKB-UniRule"/>
</dbReference>
<dbReference type="GO" id="GO:0006145">
    <property type="term" value="P:purine nucleobase catabolic process"/>
    <property type="evidence" value="ECO:0007669"/>
    <property type="project" value="TreeGrafter"/>
</dbReference>
<dbReference type="CDD" id="cd01315">
    <property type="entry name" value="L-HYD_ALN"/>
    <property type="match status" value="1"/>
</dbReference>
<dbReference type="FunFam" id="3.20.20.140:FF:000013">
    <property type="entry name" value="Allantoinase"/>
    <property type="match status" value="1"/>
</dbReference>
<dbReference type="Gene3D" id="3.20.20.140">
    <property type="entry name" value="Metal-dependent hydrolases"/>
    <property type="match status" value="1"/>
</dbReference>
<dbReference type="HAMAP" id="MF_01645">
    <property type="entry name" value="Hydantoinase"/>
    <property type="match status" value="1"/>
</dbReference>
<dbReference type="InterPro" id="IPR017593">
    <property type="entry name" value="Allantoinase"/>
</dbReference>
<dbReference type="InterPro" id="IPR047604">
    <property type="entry name" value="Allantoinase_bact"/>
</dbReference>
<dbReference type="InterPro" id="IPR006680">
    <property type="entry name" value="Amidohydro-rel"/>
</dbReference>
<dbReference type="InterPro" id="IPR050138">
    <property type="entry name" value="DHOase/Allantoinase_Hydrolase"/>
</dbReference>
<dbReference type="InterPro" id="IPR011059">
    <property type="entry name" value="Metal-dep_hydrolase_composite"/>
</dbReference>
<dbReference type="InterPro" id="IPR032466">
    <property type="entry name" value="Metal_Hydrolase"/>
</dbReference>
<dbReference type="NCBIfam" id="TIGR03178">
    <property type="entry name" value="allantoinase"/>
    <property type="match status" value="1"/>
</dbReference>
<dbReference type="NCBIfam" id="NF005960">
    <property type="entry name" value="PRK08044.1"/>
    <property type="match status" value="1"/>
</dbReference>
<dbReference type="PANTHER" id="PTHR43668">
    <property type="entry name" value="ALLANTOINASE"/>
    <property type="match status" value="1"/>
</dbReference>
<dbReference type="PANTHER" id="PTHR43668:SF4">
    <property type="entry name" value="ALLANTOINASE"/>
    <property type="match status" value="1"/>
</dbReference>
<dbReference type="Pfam" id="PF01979">
    <property type="entry name" value="Amidohydro_1"/>
    <property type="match status" value="1"/>
</dbReference>
<dbReference type="SUPFAM" id="SSF51338">
    <property type="entry name" value="Composite domain of metallo-dependent hydrolases"/>
    <property type="match status" value="1"/>
</dbReference>
<dbReference type="SUPFAM" id="SSF51556">
    <property type="entry name" value="Metallo-dependent hydrolases"/>
    <property type="match status" value="1"/>
</dbReference>
<keyword id="KW-0378">Hydrolase</keyword>
<keyword id="KW-0479">Metal-binding</keyword>
<keyword id="KW-0659">Purine metabolism</keyword>
<keyword id="KW-0862">Zinc</keyword>
<proteinExistence type="inferred from homology"/>
<comment type="function">
    <text evidence="1">Catalyzes the conversion of allantoin (5-ureidohydantoin) to allantoic acid by hydrolytic cleavage of the five-member hydantoin ring.</text>
</comment>
<comment type="catalytic activity">
    <reaction evidence="1">
        <text>(S)-allantoin + H2O = allantoate + H(+)</text>
        <dbReference type="Rhea" id="RHEA:17029"/>
        <dbReference type="ChEBI" id="CHEBI:15377"/>
        <dbReference type="ChEBI" id="CHEBI:15378"/>
        <dbReference type="ChEBI" id="CHEBI:15678"/>
        <dbReference type="ChEBI" id="CHEBI:17536"/>
        <dbReference type="EC" id="3.5.2.5"/>
    </reaction>
</comment>
<comment type="cofactor">
    <cofactor evidence="1">
        <name>Zn(2+)</name>
        <dbReference type="ChEBI" id="CHEBI:29105"/>
    </cofactor>
    <text evidence="1">Binds 2 Zn(2+) ions per subunit.</text>
</comment>
<comment type="pathway">
    <text evidence="1">Nitrogen metabolism; (S)-allantoin degradation; allantoate from (S)-allantoin: step 1/1.</text>
</comment>
<comment type="subunit">
    <text evidence="1">Homotetramer.</text>
</comment>
<comment type="PTM">
    <text evidence="1">Carboxylation allows a single lysine to coordinate two zinc ions.</text>
</comment>
<comment type="similarity">
    <text evidence="1">Belongs to the metallo-dependent hydrolases superfamily. Allantoinase family.</text>
</comment>
<gene>
    <name evidence="1" type="primary">allB</name>
    <name type="ordered locus">SPAB_03041</name>
</gene>
<name>ALLB_SALPB</name>
<feature type="chain" id="PRO_1000088217" description="Allantoinase">
    <location>
        <begin position="1"/>
        <end position="453"/>
    </location>
</feature>
<feature type="binding site" evidence="1">
    <location>
        <position position="59"/>
    </location>
    <ligand>
        <name>Zn(2+)</name>
        <dbReference type="ChEBI" id="CHEBI:29105"/>
        <label>1</label>
    </ligand>
</feature>
<feature type="binding site" evidence="1">
    <location>
        <position position="61"/>
    </location>
    <ligand>
        <name>Zn(2+)</name>
        <dbReference type="ChEBI" id="CHEBI:29105"/>
        <label>1</label>
    </ligand>
</feature>
<feature type="binding site" description="via carbamate group" evidence="1">
    <location>
        <position position="146"/>
    </location>
    <ligand>
        <name>Zn(2+)</name>
        <dbReference type="ChEBI" id="CHEBI:29105"/>
        <label>1</label>
    </ligand>
</feature>
<feature type="binding site" description="via carbamate group" evidence="1">
    <location>
        <position position="146"/>
    </location>
    <ligand>
        <name>Zn(2+)</name>
        <dbReference type="ChEBI" id="CHEBI:29105"/>
        <label>2</label>
    </ligand>
</feature>
<feature type="binding site" evidence="1">
    <location>
        <position position="186"/>
    </location>
    <ligand>
        <name>Zn(2+)</name>
        <dbReference type="ChEBI" id="CHEBI:29105"/>
        <label>2</label>
    </ligand>
</feature>
<feature type="binding site" evidence="1">
    <location>
        <position position="242"/>
    </location>
    <ligand>
        <name>Zn(2+)</name>
        <dbReference type="ChEBI" id="CHEBI:29105"/>
        <label>2</label>
    </ligand>
</feature>
<feature type="binding site" evidence="1">
    <location>
        <position position="315"/>
    </location>
    <ligand>
        <name>Zn(2+)</name>
        <dbReference type="ChEBI" id="CHEBI:29105"/>
        <label>1</label>
    </ligand>
</feature>
<feature type="modified residue" description="N6-carboxylysine" evidence="1">
    <location>
        <position position="146"/>
    </location>
</feature>
<evidence type="ECO:0000255" key="1">
    <source>
        <dbReference type="HAMAP-Rule" id="MF_01645"/>
    </source>
</evidence>
<reference key="1">
    <citation type="submission" date="2007-11" db="EMBL/GenBank/DDBJ databases">
        <authorList>
            <consortium name="The Salmonella enterica serovar Paratyphi B Genome Sequencing Project"/>
            <person name="McClelland M."/>
            <person name="Sanderson E.K."/>
            <person name="Porwollik S."/>
            <person name="Spieth J."/>
            <person name="Clifton W.S."/>
            <person name="Fulton R."/>
            <person name="Cordes M."/>
            <person name="Wollam A."/>
            <person name="Shah N."/>
            <person name="Pepin K."/>
            <person name="Bhonagiri V."/>
            <person name="Nash W."/>
            <person name="Johnson M."/>
            <person name="Thiruvilangam P."/>
            <person name="Wilson R."/>
        </authorList>
    </citation>
    <scope>NUCLEOTIDE SEQUENCE [LARGE SCALE GENOMIC DNA]</scope>
    <source>
        <strain>ATCC BAA-1250 / SPB7</strain>
    </source>
</reference>